<proteinExistence type="inferred from homology"/>
<evidence type="ECO:0000255" key="1">
    <source>
        <dbReference type="HAMAP-Rule" id="MF_00440"/>
    </source>
</evidence>
<reference key="1">
    <citation type="journal article" date="2004" name="Nucleic Acids Res.">
        <title>Whole genome comparisons of serotype 4b and 1/2a strains of the food-borne pathogen Listeria monocytogenes reveal new insights into the core genome components of this species.</title>
        <authorList>
            <person name="Nelson K.E."/>
            <person name="Fouts D.E."/>
            <person name="Mongodin E.F."/>
            <person name="Ravel J."/>
            <person name="DeBoy R.T."/>
            <person name="Kolonay J.F."/>
            <person name="Rasko D.A."/>
            <person name="Angiuoli S.V."/>
            <person name="Gill S.R."/>
            <person name="Paulsen I.T."/>
            <person name="Peterson J.D."/>
            <person name="White O."/>
            <person name="Nelson W.C."/>
            <person name="Nierman W.C."/>
            <person name="Beanan M.J."/>
            <person name="Brinkac L.M."/>
            <person name="Daugherty S.C."/>
            <person name="Dodson R.J."/>
            <person name="Durkin A.S."/>
            <person name="Madupu R."/>
            <person name="Haft D.H."/>
            <person name="Selengut J."/>
            <person name="Van Aken S.E."/>
            <person name="Khouri H.M."/>
            <person name="Fedorova N."/>
            <person name="Forberger H.A."/>
            <person name="Tran B."/>
            <person name="Kathariou S."/>
            <person name="Wonderling L.D."/>
            <person name="Uhlich G.A."/>
            <person name="Bayles D.O."/>
            <person name="Luchansky J.B."/>
            <person name="Fraser C.M."/>
        </authorList>
    </citation>
    <scope>NUCLEOTIDE SEQUENCE [LARGE SCALE GENOMIC DNA]</scope>
    <source>
        <strain>F2365</strain>
    </source>
</reference>
<dbReference type="EMBL" id="AE017262">
    <property type="protein sequence ID" value="AAT04359.1"/>
    <property type="molecule type" value="Genomic_DNA"/>
</dbReference>
<dbReference type="RefSeq" id="WP_003723246.1">
    <property type="nucleotide sequence ID" value="NC_002973.6"/>
</dbReference>
<dbReference type="SMR" id="Q71ZA5"/>
<dbReference type="DNASU" id="2798504"/>
<dbReference type="KEGG" id="lmf:LMOf2365_1584"/>
<dbReference type="HOGENOM" id="CLU_108412_0_0_9"/>
<dbReference type="GO" id="GO:0005524">
    <property type="term" value="F:ATP binding"/>
    <property type="evidence" value="ECO:0007669"/>
    <property type="project" value="UniProtKB-KW"/>
</dbReference>
<dbReference type="GO" id="GO:0003677">
    <property type="term" value="F:DNA binding"/>
    <property type="evidence" value="ECO:0007669"/>
    <property type="project" value="UniProtKB-KW"/>
</dbReference>
<dbReference type="GO" id="GO:0008270">
    <property type="term" value="F:zinc ion binding"/>
    <property type="evidence" value="ECO:0007669"/>
    <property type="project" value="UniProtKB-UniRule"/>
</dbReference>
<dbReference type="GO" id="GO:0045892">
    <property type="term" value="P:negative regulation of DNA-templated transcription"/>
    <property type="evidence" value="ECO:0007669"/>
    <property type="project" value="UniProtKB-UniRule"/>
</dbReference>
<dbReference type="HAMAP" id="MF_00440">
    <property type="entry name" value="NrdR"/>
    <property type="match status" value="1"/>
</dbReference>
<dbReference type="InterPro" id="IPR005144">
    <property type="entry name" value="ATP-cone_dom"/>
</dbReference>
<dbReference type="InterPro" id="IPR055173">
    <property type="entry name" value="NrdR-like_N"/>
</dbReference>
<dbReference type="InterPro" id="IPR003796">
    <property type="entry name" value="RNR_NrdR-like"/>
</dbReference>
<dbReference type="NCBIfam" id="TIGR00244">
    <property type="entry name" value="transcriptional regulator NrdR"/>
    <property type="match status" value="1"/>
</dbReference>
<dbReference type="PANTHER" id="PTHR30455">
    <property type="entry name" value="TRANSCRIPTIONAL REPRESSOR NRDR"/>
    <property type="match status" value="1"/>
</dbReference>
<dbReference type="PANTHER" id="PTHR30455:SF2">
    <property type="entry name" value="TRANSCRIPTIONAL REPRESSOR NRDR"/>
    <property type="match status" value="1"/>
</dbReference>
<dbReference type="Pfam" id="PF03477">
    <property type="entry name" value="ATP-cone"/>
    <property type="match status" value="1"/>
</dbReference>
<dbReference type="Pfam" id="PF22811">
    <property type="entry name" value="Zn_ribbon_NrdR"/>
    <property type="match status" value="1"/>
</dbReference>
<dbReference type="PROSITE" id="PS51161">
    <property type="entry name" value="ATP_CONE"/>
    <property type="match status" value="1"/>
</dbReference>
<gene>
    <name evidence="1" type="primary">nrdR</name>
    <name type="ordered locus">LMOf2365_1584</name>
</gene>
<comment type="function">
    <text evidence="1">Negatively regulates transcription of bacterial ribonucleotide reductase nrd genes and operons by binding to NrdR-boxes.</text>
</comment>
<comment type="cofactor">
    <cofactor evidence="1">
        <name>Zn(2+)</name>
        <dbReference type="ChEBI" id="CHEBI:29105"/>
    </cofactor>
    <text evidence="1">Binds 1 zinc ion.</text>
</comment>
<comment type="similarity">
    <text evidence="1">Belongs to the NrdR family.</text>
</comment>
<sequence length="154" mass="17937">MRCPTCQYNGTRVVDSRPADDGNSIRRRRECEKCGFRFTTFEKVEESPLIVVKKDGAREEFAREKVRRGLIRACEKRPVSAEQIEEIVNEVERELRNIGDSEIASDLIGEKVMNKLANLDEVAYVRFASVYRQFKDISVFVEELKDLMEKNKDR</sequence>
<protein>
    <recommendedName>
        <fullName evidence="1">Transcriptional repressor NrdR</fullName>
    </recommendedName>
</protein>
<accession>Q71ZA5</accession>
<name>NRDR_LISMF</name>
<keyword id="KW-0067">ATP-binding</keyword>
<keyword id="KW-0238">DNA-binding</keyword>
<keyword id="KW-0479">Metal-binding</keyword>
<keyword id="KW-0547">Nucleotide-binding</keyword>
<keyword id="KW-0678">Repressor</keyword>
<keyword id="KW-0804">Transcription</keyword>
<keyword id="KW-0805">Transcription regulation</keyword>
<keyword id="KW-0862">Zinc</keyword>
<keyword id="KW-0863">Zinc-finger</keyword>
<feature type="chain" id="PRO_0000182315" description="Transcriptional repressor NrdR">
    <location>
        <begin position="1"/>
        <end position="154"/>
    </location>
</feature>
<feature type="domain" description="ATP-cone" evidence="1">
    <location>
        <begin position="49"/>
        <end position="139"/>
    </location>
</feature>
<feature type="zinc finger region" evidence="1">
    <location>
        <begin position="3"/>
        <end position="34"/>
    </location>
</feature>
<organism>
    <name type="scientific">Listeria monocytogenes serotype 4b (strain F2365)</name>
    <dbReference type="NCBI Taxonomy" id="265669"/>
    <lineage>
        <taxon>Bacteria</taxon>
        <taxon>Bacillati</taxon>
        <taxon>Bacillota</taxon>
        <taxon>Bacilli</taxon>
        <taxon>Bacillales</taxon>
        <taxon>Listeriaceae</taxon>
        <taxon>Listeria</taxon>
    </lineage>
</organism>